<organism>
    <name type="scientific">Streptococcus sanguinis (strain SK36)</name>
    <dbReference type="NCBI Taxonomy" id="388919"/>
    <lineage>
        <taxon>Bacteria</taxon>
        <taxon>Bacillati</taxon>
        <taxon>Bacillota</taxon>
        <taxon>Bacilli</taxon>
        <taxon>Lactobacillales</taxon>
        <taxon>Streptococcaceae</taxon>
        <taxon>Streptococcus</taxon>
    </lineage>
</organism>
<dbReference type="EC" id="2.4.2.9" evidence="1"/>
<dbReference type="EMBL" id="CP000387">
    <property type="protein sequence ID" value="ABN45114.1"/>
    <property type="molecule type" value="Genomic_DNA"/>
</dbReference>
<dbReference type="RefSeq" id="WP_002894672.1">
    <property type="nucleotide sequence ID" value="NZ_CAXTYR010000001.1"/>
</dbReference>
<dbReference type="RefSeq" id="YP_001035664.1">
    <property type="nucleotide sequence ID" value="NC_009009.1"/>
</dbReference>
<dbReference type="SMR" id="A3CPK9"/>
<dbReference type="STRING" id="388919.SSA_1732"/>
<dbReference type="KEGG" id="ssa:SSA_1732"/>
<dbReference type="PATRIC" id="fig|388919.9.peg.1641"/>
<dbReference type="eggNOG" id="COG0035">
    <property type="taxonomic scope" value="Bacteria"/>
</dbReference>
<dbReference type="HOGENOM" id="CLU_067096_2_2_9"/>
<dbReference type="OrthoDB" id="9781675at2"/>
<dbReference type="UniPathway" id="UPA00574">
    <property type="reaction ID" value="UER00636"/>
</dbReference>
<dbReference type="Proteomes" id="UP000002148">
    <property type="component" value="Chromosome"/>
</dbReference>
<dbReference type="GO" id="GO:0005525">
    <property type="term" value="F:GTP binding"/>
    <property type="evidence" value="ECO:0007669"/>
    <property type="project" value="UniProtKB-KW"/>
</dbReference>
<dbReference type="GO" id="GO:0000287">
    <property type="term" value="F:magnesium ion binding"/>
    <property type="evidence" value="ECO:0007669"/>
    <property type="project" value="UniProtKB-UniRule"/>
</dbReference>
<dbReference type="GO" id="GO:0004845">
    <property type="term" value="F:uracil phosphoribosyltransferase activity"/>
    <property type="evidence" value="ECO:0007669"/>
    <property type="project" value="UniProtKB-UniRule"/>
</dbReference>
<dbReference type="GO" id="GO:0044206">
    <property type="term" value="P:UMP salvage"/>
    <property type="evidence" value="ECO:0007669"/>
    <property type="project" value="UniProtKB-UniRule"/>
</dbReference>
<dbReference type="GO" id="GO:0006223">
    <property type="term" value="P:uracil salvage"/>
    <property type="evidence" value="ECO:0007669"/>
    <property type="project" value="InterPro"/>
</dbReference>
<dbReference type="CDD" id="cd06223">
    <property type="entry name" value="PRTases_typeI"/>
    <property type="match status" value="1"/>
</dbReference>
<dbReference type="FunFam" id="3.40.50.2020:FF:000003">
    <property type="entry name" value="Uracil phosphoribosyltransferase"/>
    <property type="match status" value="1"/>
</dbReference>
<dbReference type="Gene3D" id="3.40.50.2020">
    <property type="match status" value="1"/>
</dbReference>
<dbReference type="HAMAP" id="MF_01218_B">
    <property type="entry name" value="Upp_B"/>
    <property type="match status" value="1"/>
</dbReference>
<dbReference type="InterPro" id="IPR000836">
    <property type="entry name" value="PRibTrfase_dom"/>
</dbReference>
<dbReference type="InterPro" id="IPR029057">
    <property type="entry name" value="PRTase-like"/>
</dbReference>
<dbReference type="InterPro" id="IPR034332">
    <property type="entry name" value="Upp_B"/>
</dbReference>
<dbReference type="InterPro" id="IPR050054">
    <property type="entry name" value="UPRTase/APRTase"/>
</dbReference>
<dbReference type="InterPro" id="IPR005765">
    <property type="entry name" value="Ura_phspho_trans"/>
</dbReference>
<dbReference type="NCBIfam" id="NF001097">
    <property type="entry name" value="PRK00129.1"/>
    <property type="match status" value="1"/>
</dbReference>
<dbReference type="NCBIfam" id="TIGR01091">
    <property type="entry name" value="upp"/>
    <property type="match status" value="1"/>
</dbReference>
<dbReference type="PANTHER" id="PTHR32315">
    <property type="entry name" value="ADENINE PHOSPHORIBOSYLTRANSFERASE"/>
    <property type="match status" value="1"/>
</dbReference>
<dbReference type="PANTHER" id="PTHR32315:SF4">
    <property type="entry name" value="URACIL PHOSPHORIBOSYLTRANSFERASE, CHLOROPLASTIC"/>
    <property type="match status" value="1"/>
</dbReference>
<dbReference type="Pfam" id="PF14681">
    <property type="entry name" value="UPRTase"/>
    <property type="match status" value="1"/>
</dbReference>
<dbReference type="SUPFAM" id="SSF53271">
    <property type="entry name" value="PRTase-like"/>
    <property type="match status" value="1"/>
</dbReference>
<accession>A3CPK9</accession>
<reference key="1">
    <citation type="journal article" date="2007" name="J. Bacteriol.">
        <title>Genome of the opportunistic pathogen Streptococcus sanguinis.</title>
        <authorList>
            <person name="Xu P."/>
            <person name="Alves J.M."/>
            <person name="Kitten T."/>
            <person name="Brown A."/>
            <person name="Chen Z."/>
            <person name="Ozaki L.S."/>
            <person name="Manque P."/>
            <person name="Ge X."/>
            <person name="Serrano M.G."/>
            <person name="Puiu D."/>
            <person name="Hendricks S."/>
            <person name="Wang Y."/>
            <person name="Chaplin M.D."/>
            <person name="Akan D."/>
            <person name="Paik S."/>
            <person name="Peterson D.L."/>
            <person name="Macrina F.L."/>
            <person name="Buck G.A."/>
        </authorList>
    </citation>
    <scope>NUCLEOTIDE SEQUENCE [LARGE SCALE GENOMIC DNA]</scope>
    <source>
        <strain>SK36</strain>
    </source>
</reference>
<gene>
    <name evidence="1" type="primary">upp</name>
    <name type="ordered locus">SSA_1732</name>
</gene>
<protein>
    <recommendedName>
        <fullName evidence="1">Uracil phosphoribosyltransferase</fullName>
        <ecNumber evidence="1">2.4.2.9</ecNumber>
    </recommendedName>
    <alternativeName>
        <fullName evidence="1">UMP pyrophosphorylase</fullName>
    </alternativeName>
    <alternativeName>
        <fullName evidence="1">UPRTase</fullName>
    </alternativeName>
</protein>
<comment type="function">
    <text evidence="1">Catalyzes the conversion of uracil and 5-phospho-alpha-D-ribose 1-diphosphate (PRPP) to UMP and diphosphate.</text>
</comment>
<comment type="catalytic activity">
    <reaction evidence="1">
        <text>UMP + diphosphate = 5-phospho-alpha-D-ribose 1-diphosphate + uracil</text>
        <dbReference type="Rhea" id="RHEA:13017"/>
        <dbReference type="ChEBI" id="CHEBI:17568"/>
        <dbReference type="ChEBI" id="CHEBI:33019"/>
        <dbReference type="ChEBI" id="CHEBI:57865"/>
        <dbReference type="ChEBI" id="CHEBI:58017"/>
        <dbReference type="EC" id="2.4.2.9"/>
    </reaction>
</comment>
<comment type="cofactor">
    <cofactor evidence="1">
        <name>Mg(2+)</name>
        <dbReference type="ChEBI" id="CHEBI:18420"/>
    </cofactor>
    <text evidence="1">Binds 1 Mg(2+) ion per subunit. The magnesium is bound as Mg-PRPP.</text>
</comment>
<comment type="activity regulation">
    <text evidence="1">Allosterically activated by GTP.</text>
</comment>
<comment type="pathway">
    <text evidence="1">Pyrimidine metabolism; UMP biosynthesis via salvage pathway; UMP from uracil: step 1/1.</text>
</comment>
<comment type="similarity">
    <text evidence="1">Belongs to the UPRTase family.</text>
</comment>
<sequence length="209" mass="22764">MGKLEVIAHPLIQHKLSILRRTDTSTKAFRELVDEIAMLMGYEVLRDLPLEDVEIETPITKTVQKQIAGKKLAIVPILRAGIGMVDGLLSLVPAAKVGHIGMYRDEETLKPVEYLVKLPEDIDQRQIFVVDPMLATGGSAILAVDSLKKRGASHITFVCLVSAPEGVKALQEAHPDVDIFTAALDDHLNDHGYIVPGLGDAGDRLFGTK</sequence>
<name>UPP_STRSV</name>
<evidence type="ECO:0000255" key="1">
    <source>
        <dbReference type="HAMAP-Rule" id="MF_01218"/>
    </source>
</evidence>
<feature type="chain" id="PRO_1000053800" description="Uracil phosphoribosyltransferase">
    <location>
        <begin position="1"/>
        <end position="209"/>
    </location>
</feature>
<feature type="binding site" evidence="1">
    <location>
        <position position="79"/>
    </location>
    <ligand>
        <name>5-phospho-alpha-D-ribose 1-diphosphate</name>
        <dbReference type="ChEBI" id="CHEBI:58017"/>
    </ligand>
</feature>
<feature type="binding site" evidence="1">
    <location>
        <position position="104"/>
    </location>
    <ligand>
        <name>5-phospho-alpha-D-ribose 1-diphosphate</name>
        <dbReference type="ChEBI" id="CHEBI:58017"/>
    </ligand>
</feature>
<feature type="binding site" evidence="1">
    <location>
        <begin position="131"/>
        <end position="139"/>
    </location>
    <ligand>
        <name>5-phospho-alpha-D-ribose 1-diphosphate</name>
        <dbReference type="ChEBI" id="CHEBI:58017"/>
    </ligand>
</feature>
<feature type="binding site" evidence="1">
    <location>
        <position position="194"/>
    </location>
    <ligand>
        <name>uracil</name>
        <dbReference type="ChEBI" id="CHEBI:17568"/>
    </ligand>
</feature>
<feature type="binding site" evidence="1">
    <location>
        <begin position="199"/>
        <end position="201"/>
    </location>
    <ligand>
        <name>uracil</name>
        <dbReference type="ChEBI" id="CHEBI:17568"/>
    </ligand>
</feature>
<feature type="binding site" evidence="1">
    <location>
        <position position="200"/>
    </location>
    <ligand>
        <name>5-phospho-alpha-D-ribose 1-diphosphate</name>
        <dbReference type="ChEBI" id="CHEBI:58017"/>
    </ligand>
</feature>
<proteinExistence type="inferred from homology"/>
<keyword id="KW-0021">Allosteric enzyme</keyword>
<keyword id="KW-0328">Glycosyltransferase</keyword>
<keyword id="KW-0342">GTP-binding</keyword>
<keyword id="KW-0460">Magnesium</keyword>
<keyword id="KW-0547">Nucleotide-binding</keyword>
<keyword id="KW-1185">Reference proteome</keyword>
<keyword id="KW-0808">Transferase</keyword>